<feature type="transit peptide" description="Mitochondrion" evidence="2">
    <location>
        <begin position="1"/>
        <end position="56"/>
    </location>
</feature>
<feature type="chain" id="PRO_0000383148" description="Small ribosomal subunit protein mS31">
    <location>
        <begin position="57"/>
        <end position="387"/>
    </location>
</feature>
<feature type="region of interest" description="Disordered" evidence="3">
    <location>
        <begin position="59"/>
        <end position="83"/>
    </location>
</feature>
<feature type="region of interest" description="Disordered" evidence="3">
    <location>
        <begin position="203"/>
        <end position="228"/>
    </location>
</feature>
<feature type="compositionally biased region" description="Polar residues" evidence="3">
    <location>
        <begin position="66"/>
        <end position="76"/>
    </location>
</feature>
<feature type="compositionally biased region" description="Polar residues" evidence="3">
    <location>
        <begin position="207"/>
        <end position="217"/>
    </location>
</feature>
<keyword id="KW-0496">Mitochondrion</keyword>
<keyword id="KW-1185">Reference proteome</keyword>
<keyword id="KW-0687">Ribonucleoprotein</keyword>
<keyword id="KW-0689">Ribosomal protein</keyword>
<keyword id="KW-0809">Transit peptide</keyword>
<comment type="subunit">
    <text evidence="1">Component of the mitochondrial ribosome small subunit (28S) which comprises a 12S rRNA and about 30 distinct proteins.</text>
</comment>
<comment type="subcellular location">
    <subcellularLocation>
        <location evidence="1">Mitochondrion</location>
    </subcellularLocation>
</comment>
<comment type="similarity">
    <text evidence="4">Belongs to the mitochondrion-specific ribosomal protein mS31 family.</text>
</comment>
<name>RT31_RAT</name>
<reference key="1">
    <citation type="submission" date="2005-09" db="EMBL/GenBank/DDBJ databases">
        <authorList>
            <person name="Mural R.J."/>
            <person name="Adams M.D."/>
            <person name="Myers E.W."/>
            <person name="Smith H.O."/>
            <person name="Venter J.C."/>
        </authorList>
    </citation>
    <scope>NUCLEOTIDE SEQUENCE [LARGE SCALE GENOMIC DNA]</scope>
</reference>
<reference key="2">
    <citation type="journal article" date="2004" name="Genome Res.">
        <title>The status, quality, and expansion of the NIH full-length cDNA project: the Mammalian Gene Collection (MGC).</title>
        <authorList>
            <consortium name="The MGC Project Team"/>
        </authorList>
    </citation>
    <scope>NUCLEOTIDE SEQUENCE [LARGE SCALE MRNA]</scope>
    <source>
        <tissue>Kidney</tissue>
    </source>
</reference>
<proteinExistence type="evidence at transcript level"/>
<accession>B0BN56</accession>
<gene>
    <name type="primary">Mrps31</name>
</gene>
<organism>
    <name type="scientific">Rattus norvegicus</name>
    <name type="common">Rat</name>
    <dbReference type="NCBI Taxonomy" id="10116"/>
    <lineage>
        <taxon>Eukaryota</taxon>
        <taxon>Metazoa</taxon>
        <taxon>Chordata</taxon>
        <taxon>Craniata</taxon>
        <taxon>Vertebrata</taxon>
        <taxon>Euteleostomi</taxon>
        <taxon>Mammalia</taxon>
        <taxon>Eutheria</taxon>
        <taxon>Euarchontoglires</taxon>
        <taxon>Glires</taxon>
        <taxon>Rodentia</taxon>
        <taxon>Myomorpha</taxon>
        <taxon>Muroidea</taxon>
        <taxon>Muridae</taxon>
        <taxon>Murinae</taxon>
        <taxon>Rattus</taxon>
    </lineage>
</organism>
<protein>
    <recommendedName>
        <fullName evidence="4">Small ribosomal subunit protein mS31</fullName>
    </recommendedName>
    <alternativeName>
        <fullName>28S ribosomal protein S31, mitochondrial</fullName>
        <shortName>MRP-S31</shortName>
        <shortName>S31mt</shortName>
    </alternativeName>
</protein>
<sequence>MLHRIPAFIRPRPFSGLPLSCGNREVSVAASVLPAAGSGAVRTENTIQRHFCTSRSICSKKDDQSVPANETSQKAAESQGEGKETLKKNLLDVIKDMKVQLNTANVKTTKPRGRQPPAHLETAVGRLQKALGEPPRKRNEFLSPELVAAASAVADSLPFDKQTTKSELLKQLQQHEEESRAQTDRQKRRVSFTQIISNMKIAKSPSMRVSSRPQHQIQFDEEVDSSLSQEKPADFRRRKCLFKGKRLSIFDVKAFDDEAPEPEAAPSLWEIEFAKQLATVSEQPFGNGFEEMIQWTKEGKLWEFPVNNEAGLDDDGSEFHEHIFLEKHLEDFPKQGPIRLFMELVTCGLSKNPYLSVRQKVEHIEWFRNYFNEKRDILKENNIHLTS</sequence>
<dbReference type="EMBL" id="CH473970">
    <property type="protein sequence ID" value="EDM09000.1"/>
    <property type="molecule type" value="Genomic_DNA"/>
</dbReference>
<dbReference type="EMBL" id="BC158691">
    <property type="protein sequence ID" value="AAI58692.1"/>
    <property type="molecule type" value="mRNA"/>
</dbReference>
<dbReference type="RefSeq" id="NP_001099561.1">
    <property type="nucleotide sequence ID" value="NM_001106091.1"/>
</dbReference>
<dbReference type="RefSeq" id="XP_006253411.1">
    <property type="nucleotide sequence ID" value="XM_006253349.3"/>
</dbReference>
<dbReference type="RefSeq" id="XP_063131321.1">
    <property type="nucleotide sequence ID" value="XM_063275251.1"/>
</dbReference>
<dbReference type="RefSeq" id="XP_063131322.1">
    <property type="nucleotide sequence ID" value="XM_063275252.1"/>
</dbReference>
<dbReference type="SMR" id="B0BN56"/>
<dbReference type="FunCoup" id="B0BN56">
    <property type="interactions" value="2742"/>
</dbReference>
<dbReference type="IntAct" id="B0BN56">
    <property type="interactions" value="3"/>
</dbReference>
<dbReference type="STRING" id="10116.ENSRNOP00000015790"/>
<dbReference type="iPTMnet" id="B0BN56"/>
<dbReference type="PhosphoSitePlus" id="B0BN56"/>
<dbReference type="jPOST" id="B0BN56"/>
<dbReference type="PaxDb" id="10116-ENSRNOP00000015790"/>
<dbReference type="PeptideAtlas" id="B0BN56"/>
<dbReference type="Ensembl" id="ENSRNOT00000015790.6">
    <property type="protein sequence ID" value="ENSRNOP00000015790.4"/>
    <property type="gene ID" value="ENSRNOG00000011839.6"/>
</dbReference>
<dbReference type="GeneID" id="290850"/>
<dbReference type="KEGG" id="rno:290850"/>
<dbReference type="UCSC" id="RGD:1307668">
    <property type="organism name" value="rat"/>
</dbReference>
<dbReference type="AGR" id="RGD:1307668"/>
<dbReference type="CTD" id="10240"/>
<dbReference type="RGD" id="1307668">
    <property type="gene designation" value="Mrps31"/>
</dbReference>
<dbReference type="eggNOG" id="ENOG502QSX9">
    <property type="taxonomic scope" value="Eukaryota"/>
</dbReference>
<dbReference type="GeneTree" id="ENSGT00390000010017"/>
<dbReference type="HOGENOM" id="CLU_052666_0_0_1"/>
<dbReference type="InParanoid" id="B0BN56"/>
<dbReference type="OrthoDB" id="85254at9989"/>
<dbReference type="PhylomeDB" id="B0BN56"/>
<dbReference type="TreeFam" id="TF324305"/>
<dbReference type="Reactome" id="R-RNO-5389840">
    <property type="pathway name" value="Mitochondrial translation elongation"/>
</dbReference>
<dbReference type="Reactome" id="R-RNO-5419276">
    <property type="pathway name" value="Mitochondrial translation termination"/>
</dbReference>
<dbReference type="PRO" id="PR:B0BN56"/>
<dbReference type="Proteomes" id="UP000002494">
    <property type="component" value="Chromosome 16"/>
</dbReference>
<dbReference type="Proteomes" id="UP000234681">
    <property type="component" value="Chromosome 16"/>
</dbReference>
<dbReference type="Bgee" id="ENSRNOG00000011839">
    <property type="expression patterns" value="Expressed in jejunum and 20 other cell types or tissues"/>
</dbReference>
<dbReference type="GO" id="GO:0005763">
    <property type="term" value="C:mitochondrial small ribosomal subunit"/>
    <property type="evidence" value="ECO:0000250"/>
    <property type="project" value="UniProtKB"/>
</dbReference>
<dbReference type="GO" id="GO:0005739">
    <property type="term" value="C:mitochondrion"/>
    <property type="evidence" value="ECO:0000266"/>
    <property type="project" value="RGD"/>
</dbReference>
<dbReference type="GO" id="GO:0019904">
    <property type="term" value="F:protein domain specific binding"/>
    <property type="evidence" value="ECO:0000266"/>
    <property type="project" value="RGD"/>
</dbReference>
<dbReference type="GO" id="GO:0003735">
    <property type="term" value="F:structural constituent of ribosome"/>
    <property type="evidence" value="ECO:0007669"/>
    <property type="project" value="InterPro"/>
</dbReference>
<dbReference type="InterPro" id="IPR026299">
    <property type="entry name" value="MRP-S31"/>
</dbReference>
<dbReference type="PANTHER" id="PTHR13231">
    <property type="entry name" value="MITOCHONDRIAL RIBOSOMAL PROTEIN S31"/>
    <property type="match status" value="1"/>
</dbReference>
<dbReference type="PANTHER" id="PTHR13231:SF3">
    <property type="entry name" value="SMALL RIBOSOMAL SUBUNIT PROTEIN MS31"/>
    <property type="match status" value="1"/>
</dbReference>
<dbReference type="Pfam" id="PF15433">
    <property type="entry name" value="MRP-S31"/>
    <property type="match status" value="1"/>
</dbReference>
<evidence type="ECO:0000250" key="1">
    <source>
        <dbReference type="UniProtKB" id="P82925"/>
    </source>
</evidence>
<evidence type="ECO:0000255" key="2"/>
<evidence type="ECO:0000256" key="3">
    <source>
        <dbReference type="SAM" id="MobiDB-lite"/>
    </source>
</evidence>
<evidence type="ECO:0000305" key="4"/>